<name>ACSA_RALN1</name>
<gene>
    <name evidence="1" type="primary">acsA</name>
    <name type="ordered locus">RSc1952</name>
    <name type="ORF">RS03526</name>
</gene>
<evidence type="ECO:0000255" key="1">
    <source>
        <dbReference type="HAMAP-Rule" id="MF_01123"/>
    </source>
</evidence>
<dbReference type="EC" id="6.2.1.1" evidence="1"/>
<dbReference type="EMBL" id="AL646052">
    <property type="protein sequence ID" value="CAD15654.1"/>
    <property type="molecule type" value="Genomic_DNA"/>
</dbReference>
<dbReference type="RefSeq" id="WP_011001889.1">
    <property type="nucleotide sequence ID" value="NC_003295.1"/>
</dbReference>
<dbReference type="SMR" id="Q8XY11"/>
<dbReference type="STRING" id="267608.RSc1952"/>
<dbReference type="EnsemblBacteria" id="CAD15654">
    <property type="protein sequence ID" value="CAD15654"/>
    <property type="gene ID" value="RSc1952"/>
</dbReference>
<dbReference type="KEGG" id="rso:RSc1952"/>
<dbReference type="PATRIC" id="fig|267608.8.peg.1983"/>
<dbReference type="eggNOG" id="COG0365">
    <property type="taxonomic scope" value="Bacteria"/>
</dbReference>
<dbReference type="HOGENOM" id="CLU_000022_3_6_4"/>
<dbReference type="Proteomes" id="UP000001436">
    <property type="component" value="Chromosome"/>
</dbReference>
<dbReference type="GO" id="GO:0005829">
    <property type="term" value="C:cytosol"/>
    <property type="evidence" value="ECO:0007669"/>
    <property type="project" value="TreeGrafter"/>
</dbReference>
<dbReference type="GO" id="GO:0003987">
    <property type="term" value="F:acetate-CoA ligase activity"/>
    <property type="evidence" value="ECO:0007669"/>
    <property type="project" value="UniProtKB-UniRule"/>
</dbReference>
<dbReference type="GO" id="GO:0016208">
    <property type="term" value="F:AMP binding"/>
    <property type="evidence" value="ECO:0007669"/>
    <property type="project" value="InterPro"/>
</dbReference>
<dbReference type="GO" id="GO:0005524">
    <property type="term" value="F:ATP binding"/>
    <property type="evidence" value="ECO:0007669"/>
    <property type="project" value="UniProtKB-KW"/>
</dbReference>
<dbReference type="GO" id="GO:0046872">
    <property type="term" value="F:metal ion binding"/>
    <property type="evidence" value="ECO:0007669"/>
    <property type="project" value="UniProtKB-KW"/>
</dbReference>
<dbReference type="GO" id="GO:0019427">
    <property type="term" value="P:acetyl-CoA biosynthetic process from acetate"/>
    <property type="evidence" value="ECO:0007669"/>
    <property type="project" value="InterPro"/>
</dbReference>
<dbReference type="CDD" id="cd05966">
    <property type="entry name" value="ACS"/>
    <property type="match status" value="1"/>
</dbReference>
<dbReference type="FunFam" id="3.40.50.12780:FF:000001">
    <property type="entry name" value="Acetyl-coenzyme A synthetase"/>
    <property type="match status" value="1"/>
</dbReference>
<dbReference type="Gene3D" id="3.30.300.30">
    <property type="match status" value="1"/>
</dbReference>
<dbReference type="Gene3D" id="3.40.50.12780">
    <property type="entry name" value="N-terminal domain of ligase-like"/>
    <property type="match status" value="1"/>
</dbReference>
<dbReference type="HAMAP" id="MF_01123">
    <property type="entry name" value="Ac_CoA_synth"/>
    <property type="match status" value="1"/>
</dbReference>
<dbReference type="InterPro" id="IPR011904">
    <property type="entry name" value="Ac_CoA_lig"/>
</dbReference>
<dbReference type="InterPro" id="IPR032387">
    <property type="entry name" value="ACAS_N"/>
</dbReference>
<dbReference type="InterPro" id="IPR025110">
    <property type="entry name" value="AMP-bd_C"/>
</dbReference>
<dbReference type="InterPro" id="IPR045851">
    <property type="entry name" value="AMP-bd_C_sf"/>
</dbReference>
<dbReference type="InterPro" id="IPR020845">
    <property type="entry name" value="AMP-binding_CS"/>
</dbReference>
<dbReference type="InterPro" id="IPR000873">
    <property type="entry name" value="AMP-dep_synth/lig_dom"/>
</dbReference>
<dbReference type="InterPro" id="IPR042099">
    <property type="entry name" value="ANL_N_sf"/>
</dbReference>
<dbReference type="NCBIfam" id="TIGR02188">
    <property type="entry name" value="Ac_CoA_lig_AcsA"/>
    <property type="match status" value="1"/>
</dbReference>
<dbReference type="NCBIfam" id="NF001208">
    <property type="entry name" value="PRK00174.1"/>
    <property type="match status" value="1"/>
</dbReference>
<dbReference type="PANTHER" id="PTHR24095">
    <property type="entry name" value="ACETYL-COENZYME A SYNTHETASE"/>
    <property type="match status" value="1"/>
</dbReference>
<dbReference type="PANTHER" id="PTHR24095:SF14">
    <property type="entry name" value="ACETYL-COENZYME A SYNTHETASE 1"/>
    <property type="match status" value="1"/>
</dbReference>
<dbReference type="Pfam" id="PF16177">
    <property type="entry name" value="ACAS_N"/>
    <property type="match status" value="1"/>
</dbReference>
<dbReference type="Pfam" id="PF00501">
    <property type="entry name" value="AMP-binding"/>
    <property type="match status" value="1"/>
</dbReference>
<dbReference type="Pfam" id="PF13193">
    <property type="entry name" value="AMP-binding_C"/>
    <property type="match status" value="1"/>
</dbReference>
<dbReference type="SUPFAM" id="SSF56801">
    <property type="entry name" value="Acetyl-CoA synthetase-like"/>
    <property type="match status" value="1"/>
</dbReference>
<dbReference type="PROSITE" id="PS00455">
    <property type="entry name" value="AMP_BINDING"/>
    <property type="match status" value="1"/>
</dbReference>
<organism>
    <name type="scientific">Ralstonia nicotianae (strain ATCC BAA-1114 / GMI1000)</name>
    <name type="common">Ralstonia solanacearum</name>
    <dbReference type="NCBI Taxonomy" id="267608"/>
    <lineage>
        <taxon>Bacteria</taxon>
        <taxon>Pseudomonadati</taxon>
        <taxon>Pseudomonadota</taxon>
        <taxon>Betaproteobacteria</taxon>
        <taxon>Burkholderiales</taxon>
        <taxon>Burkholderiaceae</taxon>
        <taxon>Ralstonia</taxon>
        <taxon>Ralstonia solanacearum species complex</taxon>
    </lineage>
</organism>
<protein>
    <recommendedName>
        <fullName evidence="1">Acetyl-coenzyme A synthetase</fullName>
        <shortName evidence="1">AcCoA synthetase</shortName>
        <shortName evidence="1">Acs</shortName>
        <ecNumber evidence="1">6.2.1.1</ecNumber>
    </recommendedName>
    <alternativeName>
        <fullName evidence="1">Acetate--CoA ligase</fullName>
    </alternativeName>
    <alternativeName>
        <fullName evidence="1">Acyl-activating enzyme</fullName>
    </alternativeName>
</protein>
<sequence>MAGIESVLQETRVFEPPASFVKQANIAGMDAYRTLCAEAERDYEGFWARLAHEHLLWHKPFSKVLDESRAPFYTWFEDGELNASYNCLERNLENGNADKVAVIFEADDGSVARITYRELHARVCRFANGLKALGIRKGDRVVIYMPMSIEGVVAMQACARIGATHSVVFGGFSAKSLQERIVDVGAVAVITADEQMRGGKALPLKAIADEALAMEGSEAVRHVIVYRRTGAGVNWVEGRDRAMDEVEAGQPDTCEVTPVGAEHPLFILYTSGSTGKPKGVQHSTGGYLLWALLTMQWTFDLKPDDVFWCTADIGWVTGHTYIAYGPLAAGATQVVFEGVPTYPNAGRFWDMIQKHRVNTFYTAPTAIRSLIKAAEADETSHPKRYDLSSLRLLGTVGEPINPEAWMWYHTNIGGGRCPIVDTFWQTETGGHMISPLPGATPLVPGSCTLPLPGIMAAIVDETGQDLPDGQGGILVVKRPWPAMIRTIWGDPERFRKSYFPAELGGKLYLAGDGSVRDKETGYFTIMGRIDDVLNVSGHRMGTMEIESALVANPLVAEAAVVGRPDDMTGEAICAFVVLKRTRPNGDEARQIATDLRNWVGKEIGPIAKPKDIRFGDNLPKTRSGKIMRRLLRSIAKGEDITQDTSTLENPAILEQLKEAR</sequence>
<accession>Q8XY11</accession>
<keyword id="KW-0007">Acetylation</keyword>
<keyword id="KW-0067">ATP-binding</keyword>
<keyword id="KW-0436">Ligase</keyword>
<keyword id="KW-0460">Magnesium</keyword>
<keyword id="KW-0479">Metal-binding</keyword>
<keyword id="KW-0547">Nucleotide-binding</keyword>
<keyword id="KW-1185">Reference proteome</keyword>
<feature type="chain" id="PRO_0000208379" description="Acetyl-coenzyme A synthetase">
    <location>
        <begin position="1"/>
        <end position="660"/>
    </location>
</feature>
<feature type="binding site" evidence="1">
    <location>
        <begin position="197"/>
        <end position="200"/>
    </location>
    <ligand>
        <name>CoA</name>
        <dbReference type="ChEBI" id="CHEBI:57287"/>
    </ligand>
</feature>
<feature type="binding site" evidence="1">
    <location>
        <position position="317"/>
    </location>
    <ligand>
        <name>CoA</name>
        <dbReference type="ChEBI" id="CHEBI:57287"/>
    </ligand>
</feature>
<feature type="binding site" evidence="1">
    <location>
        <begin position="397"/>
        <end position="399"/>
    </location>
    <ligand>
        <name>ATP</name>
        <dbReference type="ChEBI" id="CHEBI:30616"/>
    </ligand>
</feature>
<feature type="binding site" evidence="1">
    <location>
        <begin position="421"/>
        <end position="426"/>
    </location>
    <ligand>
        <name>ATP</name>
        <dbReference type="ChEBI" id="CHEBI:30616"/>
    </ligand>
</feature>
<feature type="binding site" evidence="1">
    <location>
        <position position="512"/>
    </location>
    <ligand>
        <name>ATP</name>
        <dbReference type="ChEBI" id="CHEBI:30616"/>
    </ligand>
</feature>
<feature type="binding site" evidence="1">
    <location>
        <position position="528"/>
    </location>
    <ligand>
        <name>ATP</name>
        <dbReference type="ChEBI" id="CHEBI:30616"/>
    </ligand>
</feature>
<feature type="binding site" evidence="1">
    <location>
        <position position="536"/>
    </location>
    <ligand>
        <name>CoA</name>
        <dbReference type="ChEBI" id="CHEBI:57287"/>
    </ligand>
</feature>
<feature type="binding site" evidence="1">
    <location>
        <position position="539"/>
    </location>
    <ligand>
        <name>ATP</name>
        <dbReference type="ChEBI" id="CHEBI:30616"/>
    </ligand>
</feature>
<feature type="binding site" evidence="1">
    <location>
        <position position="550"/>
    </location>
    <ligand>
        <name>Mg(2+)</name>
        <dbReference type="ChEBI" id="CHEBI:18420"/>
    </ligand>
</feature>
<feature type="binding site" evidence="1">
    <location>
        <position position="555"/>
    </location>
    <ligand>
        <name>Mg(2+)</name>
        <dbReference type="ChEBI" id="CHEBI:18420"/>
    </ligand>
</feature>
<feature type="modified residue" description="N6-acetyllysine" evidence="1">
    <location>
        <position position="625"/>
    </location>
</feature>
<proteinExistence type="inferred from homology"/>
<comment type="function">
    <text evidence="1">Catalyzes the conversion of acetate into acetyl-CoA (AcCoA), an essential intermediate at the junction of anabolic and catabolic pathways. AcsA undergoes a two-step reaction. In the first half reaction, AcsA combines acetate with ATP to form acetyl-adenylate (AcAMP) intermediate. In the second half reaction, it can then transfer the acetyl group from AcAMP to the sulfhydryl group of CoA, forming the product AcCoA.</text>
</comment>
<comment type="catalytic activity">
    <reaction evidence="1">
        <text>acetate + ATP + CoA = acetyl-CoA + AMP + diphosphate</text>
        <dbReference type="Rhea" id="RHEA:23176"/>
        <dbReference type="ChEBI" id="CHEBI:30089"/>
        <dbReference type="ChEBI" id="CHEBI:30616"/>
        <dbReference type="ChEBI" id="CHEBI:33019"/>
        <dbReference type="ChEBI" id="CHEBI:57287"/>
        <dbReference type="ChEBI" id="CHEBI:57288"/>
        <dbReference type="ChEBI" id="CHEBI:456215"/>
        <dbReference type="EC" id="6.2.1.1"/>
    </reaction>
</comment>
<comment type="cofactor">
    <cofactor evidence="1">
        <name>Mg(2+)</name>
        <dbReference type="ChEBI" id="CHEBI:18420"/>
    </cofactor>
</comment>
<comment type="PTM">
    <text evidence="1">Acetylated. Deacetylation by the SIR2-homolog deacetylase activates the enzyme.</text>
</comment>
<comment type="similarity">
    <text evidence="1">Belongs to the ATP-dependent AMP-binding enzyme family.</text>
</comment>
<reference key="1">
    <citation type="journal article" date="2002" name="Nature">
        <title>Genome sequence of the plant pathogen Ralstonia solanacearum.</title>
        <authorList>
            <person name="Salanoubat M."/>
            <person name="Genin S."/>
            <person name="Artiguenave F."/>
            <person name="Gouzy J."/>
            <person name="Mangenot S."/>
            <person name="Arlat M."/>
            <person name="Billault A."/>
            <person name="Brottier P."/>
            <person name="Camus J.-C."/>
            <person name="Cattolico L."/>
            <person name="Chandler M."/>
            <person name="Choisne N."/>
            <person name="Claudel-Renard C."/>
            <person name="Cunnac S."/>
            <person name="Demange N."/>
            <person name="Gaspin C."/>
            <person name="Lavie M."/>
            <person name="Moisan A."/>
            <person name="Robert C."/>
            <person name="Saurin W."/>
            <person name="Schiex T."/>
            <person name="Siguier P."/>
            <person name="Thebault P."/>
            <person name="Whalen M."/>
            <person name="Wincker P."/>
            <person name="Levy M."/>
            <person name="Weissenbach J."/>
            <person name="Boucher C.A."/>
        </authorList>
    </citation>
    <scope>NUCLEOTIDE SEQUENCE [LARGE SCALE GENOMIC DNA]</scope>
    <source>
        <strain>ATCC BAA-1114 / GMI1000</strain>
    </source>
</reference>